<sequence length="317" mass="34772">MPVQGSQRRLLGSLNSTPTATPRLGLAANQTGARCLEVSIPDGLFLSLGLVSLVENVLVVVAIARNRNLHSPMYCFICCLALSDLLVSGSNMLDTAVILLLEAGALAARAAVVQQLDNVIDVITCSSMLSSLCFLGAIAVDRYISIFYALRYHSIVTLRRARRVVAAIWVASILFSTLFIAYCDHAAVLLCLVVFFLAMLVLMAVLYVHMLARACQHAQGIAQLHKRQRPAHQGVGLKGAATLTILLGIFFLCWGPFFLHLTLIVLCPQHPTCSCIFKNFNLFLTLIICNAIIDPLIYAFRSQELRRTLKKVLLCSW</sequence>
<name>MSHR_TRAFR</name>
<keyword id="KW-1003">Cell membrane</keyword>
<keyword id="KW-0297">G-protein coupled receptor</keyword>
<keyword id="KW-0325">Glycoprotein</keyword>
<keyword id="KW-0449">Lipoprotein</keyword>
<keyword id="KW-0472">Membrane</keyword>
<keyword id="KW-0564">Palmitate</keyword>
<keyword id="KW-0675">Receptor</keyword>
<keyword id="KW-0807">Transducer</keyword>
<keyword id="KW-0812">Transmembrane</keyword>
<keyword id="KW-1133">Transmembrane helix</keyword>
<evidence type="ECO:0000250" key="1">
    <source>
        <dbReference type="UniProtKB" id="Q01726"/>
    </source>
</evidence>
<evidence type="ECO:0000255" key="2"/>
<evidence type="ECO:0000255" key="3">
    <source>
        <dbReference type="PROSITE-ProRule" id="PRU00521"/>
    </source>
</evidence>
<comment type="function">
    <text evidence="1">Receptor for MSH (alpha, beta and gamma) and ACTH. The activity of this receptor is mediated by G proteins which activate adenylate cyclase. Mediates melanogenesis, the production of eumelanin (black/brown) and phaeomelanin (red/yellow), via regulation of cAMP signaling in melanocytes.</text>
</comment>
<comment type="subunit">
    <text evidence="1">Interacts with MGRN1, but does not undergo MGRN1-mediated ubiquitination; this interaction competes with GNAS-binding and thus inhibits agonist-induced cAMP production. Interacts with OPN3; the interaction results in a decrease in MC1R-mediated cAMP signaling and ultimately a decrease in melanin production in melanocytes.</text>
</comment>
<comment type="subcellular location">
    <subcellularLocation>
        <location evidence="1">Cell membrane</location>
        <topology evidence="2">Multi-pass membrane protein</topology>
    </subcellularLocation>
</comment>
<comment type="similarity">
    <text evidence="3">Belongs to the G-protein coupled receptor 1 family.</text>
</comment>
<reference key="1">
    <citation type="journal article" date="2003" name="Am. J. Phys. Anthropol.">
        <title>Evolution of a pigmentation gene, the melanocortin-1 receptor, in primates.</title>
        <authorList>
            <person name="Mundy N.I."/>
            <person name="Kelly J."/>
        </authorList>
    </citation>
    <scope>NUCLEOTIDE SEQUENCE [GENOMIC DNA]</scope>
    <source>
        <strain>Isolate 1</strain>
    </source>
</reference>
<accession>Q864I4</accession>
<gene>
    <name type="primary">MC1R</name>
</gene>
<dbReference type="EMBL" id="AY205113">
    <property type="protein sequence ID" value="AAP30987.1"/>
    <property type="molecule type" value="Genomic_DNA"/>
</dbReference>
<dbReference type="SMR" id="Q864I4"/>
<dbReference type="GlyCosmos" id="Q864I4">
    <property type="glycosylation" value="1 site, No reported glycans"/>
</dbReference>
<dbReference type="GO" id="GO:0005886">
    <property type="term" value="C:plasma membrane"/>
    <property type="evidence" value="ECO:0000250"/>
    <property type="project" value="UniProtKB"/>
</dbReference>
<dbReference type="GO" id="GO:0004980">
    <property type="term" value="F:melanocyte-stimulating hormone receptor activity"/>
    <property type="evidence" value="ECO:0007669"/>
    <property type="project" value="InterPro"/>
</dbReference>
<dbReference type="GO" id="GO:0007189">
    <property type="term" value="P:adenylate cyclase-activating G protein-coupled receptor signaling pathway"/>
    <property type="evidence" value="ECO:0007669"/>
    <property type="project" value="UniProtKB-ARBA"/>
</dbReference>
<dbReference type="FunFam" id="1.20.1070.10:FF:000211">
    <property type="entry name" value="Melanocyte-stimulating hormone receptor"/>
    <property type="match status" value="1"/>
</dbReference>
<dbReference type="Gene3D" id="1.20.1070.10">
    <property type="entry name" value="Rhodopsin 7-helix transmembrane proteins"/>
    <property type="match status" value="1"/>
</dbReference>
<dbReference type="InterPro" id="IPR000276">
    <property type="entry name" value="GPCR_Rhodpsn"/>
</dbReference>
<dbReference type="InterPro" id="IPR017452">
    <property type="entry name" value="GPCR_Rhodpsn_7TM"/>
</dbReference>
<dbReference type="InterPro" id="IPR001671">
    <property type="entry name" value="Melcrt_ACTH_rcpt"/>
</dbReference>
<dbReference type="InterPro" id="IPR000761">
    <property type="entry name" value="MSH_rcpt"/>
</dbReference>
<dbReference type="PANTHER" id="PTHR22750">
    <property type="entry name" value="G-PROTEIN COUPLED RECEPTOR"/>
    <property type="match status" value="1"/>
</dbReference>
<dbReference type="Pfam" id="PF00001">
    <property type="entry name" value="7tm_1"/>
    <property type="match status" value="2"/>
</dbReference>
<dbReference type="PRINTS" id="PR00237">
    <property type="entry name" value="GPCRRHODOPSN"/>
</dbReference>
<dbReference type="PRINTS" id="PR00534">
    <property type="entry name" value="MCRFAMILY"/>
</dbReference>
<dbReference type="PRINTS" id="PR00536">
    <property type="entry name" value="MELNOCYTESHR"/>
</dbReference>
<dbReference type="SMART" id="SM01381">
    <property type="entry name" value="7TM_GPCR_Srsx"/>
    <property type="match status" value="1"/>
</dbReference>
<dbReference type="SUPFAM" id="SSF81321">
    <property type="entry name" value="Family A G protein-coupled receptor-like"/>
    <property type="match status" value="1"/>
</dbReference>
<dbReference type="PROSITE" id="PS00237">
    <property type="entry name" value="G_PROTEIN_RECEP_F1_1"/>
    <property type="match status" value="1"/>
</dbReference>
<dbReference type="PROSITE" id="PS50262">
    <property type="entry name" value="G_PROTEIN_RECEP_F1_2"/>
    <property type="match status" value="1"/>
</dbReference>
<protein>
    <recommendedName>
        <fullName>Melanocyte-stimulating hormone receptor</fullName>
        <shortName>MSH-R</shortName>
    </recommendedName>
    <alternativeName>
        <fullName>Melanocortin receptor 1</fullName>
        <shortName>MC1-R</shortName>
    </alternativeName>
</protein>
<feature type="chain" id="PRO_0000069854" description="Melanocyte-stimulating hormone receptor">
    <location>
        <begin position="1"/>
        <end position="317"/>
    </location>
</feature>
<feature type="topological domain" description="Extracellular" evidence="2">
    <location>
        <begin position="1"/>
        <end position="37"/>
    </location>
</feature>
<feature type="transmembrane region" description="Helical; Name=1" evidence="2">
    <location>
        <begin position="38"/>
        <end position="63"/>
    </location>
</feature>
<feature type="topological domain" description="Cytoplasmic" evidence="2">
    <location>
        <begin position="64"/>
        <end position="72"/>
    </location>
</feature>
<feature type="transmembrane region" description="Helical; Name=2" evidence="2">
    <location>
        <begin position="73"/>
        <end position="93"/>
    </location>
</feature>
<feature type="topological domain" description="Extracellular" evidence="2">
    <location>
        <begin position="94"/>
        <end position="118"/>
    </location>
</feature>
<feature type="transmembrane region" description="Helical; Name=3" evidence="2">
    <location>
        <begin position="119"/>
        <end position="140"/>
    </location>
</feature>
<feature type="topological domain" description="Cytoplasmic" evidence="2">
    <location>
        <begin position="141"/>
        <end position="163"/>
    </location>
</feature>
<feature type="transmembrane region" description="Helical; Name=4" evidence="2">
    <location>
        <begin position="164"/>
        <end position="183"/>
    </location>
</feature>
<feature type="topological domain" description="Extracellular" evidence="2">
    <location>
        <begin position="184"/>
        <end position="191"/>
    </location>
</feature>
<feature type="transmembrane region" description="Helical; Name=5" evidence="2">
    <location>
        <begin position="192"/>
        <end position="211"/>
    </location>
</feature>
<feature type="topological domain" description="Cytoplasmic" evidence="2">
    <location>
        <begin position="212"/>
        <end position="240"/>
    </location>
</feature>
<feature type="transmembrane region" description="Helical; Name=6" evidence="2">
    <location>
        <begin position="241"/>
        <end position="266"/>
    </location>
</feature>
<feature type="topological domain" description="Extracellular" evidence="2">
    <location>
        <begin position="267"/>
        <end position="279"/>
    </location>
</feature>
<feature type="transmembrane region" description="Helical; Name=7" evidence="2">
    <location>
        <begin position="280"/>
        <end position="300"/>
    </location>
</feature>
<feature type="topological domain" description="Cytoplasmic" evidence="2">
    <location>
        <begin position="301"/>
        <end position="317"/>
    </location>
</feature>
<feature type="lipid moiety-binding region" description="S-palmitoyl cysteine" evidence="2">
    <location>
        <position position="315"/>
    </location>
</feature>
<feature type="glycosylation site" description="N-linked (GlcNAc...) asparagine" evidence="2">
    <location>
        <position position="29"/>
    </location>
</feature>
<proteinExistence type="inferred from homology"/>
<organism>
    <name type="scientific">Trachypithecus francoisi</name>
    <name type="common">Francois' leaf monkey</name>
    <name type="synonym">Presbytis francoisi</name>
    <dbReference type="NCBI Taxonomy" id="54180"/>
    <lineage>
        <taxon>Eukaryota</taxon>
        <taxon>Metazoa</taxon>
        <taxon>Chordata</taxon>
        <taxon>Craniata</taxon>
        <taxon>Vertebrata</taxon>
        <taxon>Euteleostomi</taxon>
        <taxon>Mammalia</taxon>
        <taxon>Eutheria</taxon>
        <taxon>Euarchontoglires</taxon>
        <taxon>Primates</taxon>
        <taxon>Haplorrhini</taxon>
        <taxon>Catarrhini</taxon>
        <taxon>Cercopithecidae</taxon>
        <taxon>Colobinae</taxon>
        <taxon>Trachypithecus</taxon>
    </lineage>
</organism>